<organism>
    <name type="scientific">Ranoidea citropa</name>
    <name type="common">Australian Blue Mountains tree frog</name>
    <name type="synonym">Litoria citropa</name>
    <dbReference type="NCBI Taxonomy" id="94770"/>
    <lineage>
        <taxon>Eukaryota</taxon>
        <taxon>Metazoa</taxon>
        <taxon>Chordata</taxon>
        <taxon>Craniata</taxon>
        <taxon>Vertebrata</taxon>
        <taxon>Euteleostomi</taxon>
        <taxon>Amphibia</taxon>
        <taxon>Batrachia</taxon>
        <taxon>Anura</taxon>
        <taxon>Neobatrachia</taxon>
        <taxon>Hyloidea</taxon>
        <taxon>Hylidae</taxon>
        <taxon>Pelodryadinae</taxon>
        <taxon>Ranoidea</taxon>
    </lineage>
</organism>
<protein>
    <recommendedName>
        <fullName>Caerulein-4.2/4.2Y4</fullName>
    </recommendedName>
</protein>
<keyword id="KW-0027">Amidation</keyword>
<keyword id="KW-0878">Amphibian defense peptide</keyword>
<keyword id="KW-0903">Direct protein sequencing</keyword>
<keyword id="KW-0382">Hypotensive agent</keyword>
<keyword id="KW-0873">Pyrrolidone carboxylic acid</keyword>
<keyword id="KW-0964">Secreted</keyword>
<keyword id="KW-0765">Sulfation</keyword>
<evidence type="ECO:0000269" key="1">
    <source>
    </source>
</evidence>
<evidence type="ECO:0000305" key="2"/>
<comment type="function">
    <text evidence="2">Hypotensive neuropeptide.</text>
</comment>
<comment type="subcellular location">
    <subcellularLocation>
        <location>Secreted</location>
    </subcellularLocation>
</comment>
<comment type="tissue specificity">
    <text>Expressed by the skin dorsal glands.</text>
</comment>
<comment type="PTM">
    <text evidence="1">Isoform 4.2Y4 differs from isoform 4.2 in not being sulfated.</text>
</comment>
<comment type="mass spectrometry" mass="1404.0" method="Electrospray" evidence="1"/>
<comment type="similarity">
    <text evidence="2">Belongs to the gastrin/cholecystokinin family.</text>
</comment>
<proteinExistence type="evidence at protein level"/>
<name>CAE42_RANCI</name>
<sequence length="11" mass="1344">QQDYTGSHFDF</sequence>
<accession>P82092</accession>
<dbReference type="GO" id="GO:0005576">
    <property type="term" value="C:extracellular region"/>
    <property type="evidence" value="ECO:0007669"/>
    <property type="project" value="UniProtKB-SubCell"/>
</dbReference>
<dbReference type="GO" id="GO:0006952">
    <property type="term" value="P:defense response"/>
    <property type="evidence" value="ECO:0007669"/>
    <property type="project" value="UniProtKB-KW"/>
</dbReference>
<dbReference type="GO" id="GO:0008217">
    <property type="term" value="P:regulation of blood pressure"/>
    <property type="evidence" value="ECO:0007669"/>
    <property type="project" value="UniProtKB-KW"/>
</dbReference>
<reference key="1">
    <citation type="journal article" date="1999" name="Rapid Commun. Mass Spectrom.">
        <title>Caerulein-like peptides from the skin glands of the Australian blue mountains tree frog Litoria citropa. Part 1. Sequence determination using electrospray mass spectrometry.</title>
        <authorList>
            <person name="Wabnitz P.A."/>
            <person name="Bowie J.H."/>
            <person name="Tyler M.J."/>
        </authorList>
    </citation>
    <scope>PROTEIN SEQUENCE</scope>
    <scope>PYROGLUTAMATE FORMATION AT GLN-1</scope>
    <scope>SULFATION AT TYR-4</scope>
    <scope>AMIDATION AT PHE-11</scope>
    <scope>MASS SPECTROMETRY</scope>
    <source>
        <tissue>Skin secretion</tissue>
    </source>
</reference>
<feature type="peptide" id="PRO_0000043885" description="Caerulein-4.2/4.2Y4">
    <location>
        <begin position="1"/>
        <end position="11"/>
    </location>
</feature>
<feature type="modified residue" description="Pyrrolidone carboxylic acid" evidence="1">
    <location>
        <position position="1"/>
    </location>
</feature>
<feature type="modified residue" description="Sulfotyrosine" evidence="1">
    <location>
        <position position="4"/>
    </location>
</feature>
<feature type="modified residue" description="Phenylalanine amide" evidence="1">
    <location>
        <position position="11"/>
    </location>
</feature>